<sequence>MAAKDVKFGRTAREKMLRGVDILADAVKVTLGPKGRNVVIEKSFGAPRITKDGVSVAKEVELEDKFENMGAQMLREVASKTNDTAGDGTTTATVLGQAIVQEGAKAVAAGMNPMDLKRGIDLAVNEVVAELLKKAKKINTSEEVAQVGTISANGEAEIGKMIAEAMQKVGNEGVITVEEAKTAETELEVVEGMQFDRGYLSPYFVTNPEKMVADLEDAYILLHEKKLSNLQALLPVLEAVVQTSKPLLIIAEDVEGEALATLVVNKLRGGLKIAAVKAPGFGDCRKAMLEDIAILTGGQVISEDLGIKLESVTLDMLGRAKKVSISKENTTIVDGAGQKAEIDARVGQIKQQIEETTSDYDREKLQERLAKLAGGVAVIRVGGATEVEVKEKKDRVDDALNATRAAVEEGIVAGGGTALLRASTKITAKGVNADQEAGINIVRRAIQAPARQITTNAGEEASVIVGKILENTSETFGYNTANGEYGDLISLGIVDPVKVVRTALQNAASVAGLLITTEAMIAELPKKDAAPAGMPGGMGGMGGMDF</sequence>
<reference key="1">
    <citation type="journal article" date="2002" name="Proc. Natl. Acad. Sci. U.S.A.">
        <title>The genome sequence of the facultative intracellular pathogen Brucella melitensis.</title>
        <authorList>
            <person name="DelVecchio V.G."/>
            <person name="Kapatral V."/>
            <person name="Redkar R.J."/>
            <person name="Patra G."/>
            <person name="Mujer C."/>
            <person name="Los T."/>
            <person name="Ivanova N."/>
            <person name="Anderson I."/>
            <person name="Bhattacharyya A."/>
            <person name="Lykidis A."/>
            <person name="Reznik G."/>
            <person name="Jablonski L."/>
            <person name="Larsen N."/>
            <person name="D'Souza M."/>
            <person name="Bernal A."/>
            <person name="Mazur M."/>
            <person name="Goltsman E."/>
            <person name="Selkov E."/>
            <person name="Elzer P.H."/>
            <person name="Hagius S."/>
            <person name="O'Callaghan D."/>
            <person name="Letesson J.-J."/>
            <person name="Haselkorn R."/>
            <person name="Kyrpides N.C."/>
            <person name="Overbeek R."/>
        </authorList>
    </citation>
    <scope>NUCLEOTIDE SEQUENCE [LARGE SCALE GENOMIC DNA]</scope>
    <source>
        <strain>ATCC 23456 / CCUG 17765 / NCTC 10094 / 16M</strain>
    </source>
</reference>
<gene>
    <name evidence="1" type="primary">groEL</name>
    <name evidence="1" type="synonym">groL</name>
    <name type="ordered locus">BMEII1048</name>
</gene>
<evidence type="ECO:0000255" key="1">
    <source>
        <dbReference type="HAMAP-Rule" id="MF_00600"/>
    </source>
</evidence>
<feature type="chain" id="PRO_0000063303" description="Chaperonin GroEL">
    <location>
        <begin position="1"/>
        <end position="546"/>
    </location>
</feature>
<feature type="binding site" evidence="1">
    <location>
        <begin position="30"/>
        <end position="33"/>
    </location>
    <ligand>
        <name>ATP</name>
        <dbReference type="ChEBI" id="CHEBI:30616"/>
    </ligand>
</feature>
<feature type="binding site" evidence="1">
    <location>
        <position position="51"/>
    </location>
    <ligand>
        <name>ATP</name>
        <dbReference type="ChEBI" id="CHEBI:30616"/>
    </ligand>
</feature>
<feature type="binding site" evidence="1">
    <location>
        <begin position="87"/>
        <end position="91"/>
    </location>
    <ligand>
        <name>ATP</name>
        <dbReference type="ChEBI" id="CHEBI:30616"/>
    </ligand>
</feature>
<feature type="binding site" evidence="1">
    <location>
        <position position="415"/>
    </location>
    <ligand>
        <name>ATP</name>
        <dbReference type="ChEBI" id="CHEBI:30616"/>
    </ligand>
</feature>
<feature type="binding site" evidence="1">
    <location>
        <position position="495"/>
    </location>
    <ligand>
        <name>ATP</name>
        <dbReference type="ChEBI" id="CHEBI:30616"/>
    </ligand>
</feature>
<dbReference type="EC" id="5.6.1.7" evidence="1"/>
<dbReference type="EMBL" id="AE008918">
    <property type="protein sequence ID" value="AAL54290.1"/>
    <property type="molecule type" value="Genomic_DNA"/>
</dbReference>
<dbReference type="PIR" id="AG3640">
    <property type="entry name" value="AG3640"/>
</dbReference>
<dbReference type="RefSeq" id="WP_011005794.1">
    <property type="nucleotide sequence ID" value="NC_003318.1"/>
</dbReference>
<dbReference type="SMR" id="Q8YB53"/>
<dbReference type="GeneID" id="29595333"/>
<dbReference type="KEGG" id="bme:BMEII1048"/>
<dbReference type="eggNOG" id="COG0459">
    <property type="taxonomic scope" value="Bacteria"/>
</dbReference>
<dbReference type="PhylomeDB" id="Q8YB53"/>
<dbReference type="Proteomes" id="UP000000419">
    <property type="component" value="Chromosome II"/>
</dbReference>
<dbReference type="GO" id="GO:0005737">
    <property type="term" value="C:cytoplasm"/>
    <property type="evidence" value="ECO:0007669"/>
    <property type="project" value="UniProtKB-SubCell"/>
</dbReference>
<dbReference type="GO" id="GO:0005524">
    <property type="term" value="F:ATP binding"/>
    <property type="evidence" value="ECO:0007669"/>
    <property type="project" value="UniProtKB-UniRule"/>
</dbReference>
<dbReference type="GO" id="GO:0140662">
    <property type="term" value="F:ATP-dependent protein folding chaperone"/>
    <property type="evidence" value="ECO:0007669"/>
    <property type="project" value="InterPro"/>
</dbReference>
<dbReference type="GO" id="GO:0016853">
    <property type="term" value="F:isomerase activity"/>
    <property type="evidence" value="ECO:0007669"/>
    <property type="project" value="UniProtKB-KW"/>
</dbReference>
<dbReference type="GO" id="GO:0051082">
    <property type="term" value="F:unfolded protein binding"/>
    <property type="evidence" value="ECO:0007669"/>
    <property type="project" value="UniProtKB-UniRule"/>
</dbReference>
<dbReference type="GO" id="GO:0042026">
    <property type="term" value="P:protein refolding"/>
    <property type="evidence" value="ECO:0007669"/>
    <property type="project" value="UniProtKB-UniRule"/>
</dbReference>
<dbReference type="CDD" id="cd03344">
    <property type="entry name" value="GroEL"/>
    <property type="match status" value="1"/>
</dbReference>
<dbReference type="FunFam" id="1.10.560.10:FF:000001">
    <property type="entry name" value="60 kDa chaperonin"/>
    <property type="match status" value="1"/>
</dbReference>
<dbReference type="FunFam" id="3.50.7.10:FF:000001">
    <property type="entry name" value="60 kDa chaperonin"/>
    <property type="match status" value="1"/>
</dbReference>
<dbReference type="Gene3D" id="3.50.7.10">
    <property type="entry name" value="GroEL"/>
    <property type="match status" value="1"/>
</dbReference>
<dbReference type="Gene3D" id="1.10.560.10">
    <property type="entry name" value="GroEL-like equatorial domain"/>
    <property type="match status" value="1"/>
</dbReference>
<dbReference type="Gene3D" id="3.30.260.10">
    <property type="entry name" value="TCP-1-like chaperonin intermediate domain"/>
    <property type="match status" value="1"/>
</dbReference>
<dbReference type="HAMAP" id="MF_00600">
    <property type="entry name" value="CH60"/>
    <property type="match status" value="1"/>
</dbReference>
<dbReference type="InterPro" id="IPR018370">
    <property type="entry name" value="Chaperonin_Cpn60_CS"/>
</dbReference>
<dbReference type="InterPro" id="IPR001844">
    <property type="entry name" value="Cpn60/GroEL"/>
</dbReference>
<dbReference type="InterPro" id="IPR002423">
    <property type="entry name" value="Cpn60/GroEL/TCP-1"/>
</dbReference>
<dbReference type="InterPro" id="IPR027409">
    <property type="entry name" value="GroEL-like_apical_dom_sf"/>
</dbReference>
<dbReference type="InterPro" id="IPR027413">
    <property type="entry name" value="GROEL-like_equatorial_sf"/>
</dbReference>
<dbReference type="InterPro" id="IPR027410">
    <property type="entry name" value="TCP-1-like_intermed_sf"/>
</dbReference>
<dbReference type="NCBIfam" id="TIGR02348">
    <property type="entry name" value="GroEL"/>
    <property type="match status" value="1"/>
</dbReference>
<dbReference type="NCBIfam" id="NF000592">
    <property type="entry name" value="PRK00013.1"/>
    <property type="match status" value="1"/>
</dbReference>
<dbReference type="NCBIfam" id="NF009487">
    <property type="entry name" value="PRK12849.1"/>
    <property type="match status" value="1"/>
</dbReference>
<dbReference type="NCBIfam" id="NF009488">
    <property type="entry name" value="PRK12850.1"/>
    <property type="match status" value="1"/>
</dbReference>
<dbReference type="NCBIfam" id="NF009489">
    <property type="entry name" value="PRK12851.1"/>
    <property type="match status" value="1"/>
</dbReference>
<dbReference type="PANTHER" id="PTHR45633">
    <property type="entry name" value="60 KDA HEAT SHOCK PROTEIN, MITOCHONDRIAL"/>
    <property type="match status" value="1"/>
</dbReference>
<dbReference type="Pfam" id="PF00118">
    <property type="entry name" value="Cpn60_TCP1"/>
    <property type="match status" value="1"/>
</dbReference>
<dbReference type="PRINTS" id="PR00298">
    <property type="entry name" value="CHAPERONIN60"/>
</dbReference>
<dbReference type="SUPFAM" id="SSF52029">
    <property type="entry name" value="GroEL apical domain-like"/>
    <property type="match status" value="1"/>
</dbReference>
<dbReference type="SUPFAM" id="SSF48592">
    <property type="entry name" value="GroEL equatorial domain-like"/>
    <property type="match status" value="1"/>
</dbReference>
<dbReference type="SUPFAM" id="SSF54849">
    <property type="entry name" value="GroEL-intermediate domain like"/>
    <property type="match status" value="1"/>
</dbReference>
<dbReference type="PROSITE" id="PS00296">
    <property type="entry name" value="CHAPERONINS_CPN60"/>
    <property type="match status" value="1"/>
</dbReference>
<accession>Q8YB53</accession>
<protein>
    <recommendedName>
        <fullName evidence="1">Chaperonin GroEL</fullName>
        <ecNumber evidence="1">5.6.1.7</ecNumber>
    </recommendedName>
    <alternativeName>
        <fullName evidence="1">60 kDa chaperonin</fullName>
    </alternativeName>
    <alternativeName>
        <fullName evidence="1">Chaperonin-60</fullName>
        <shortName evidence="1">Cpn60</shortName>
    </alternativeName>
</protein>
<keyword id="KW-0067">ATP-binding</keyword>
<keyword id="KW-0143">Chaperone</keyword>
<keyword id="KW-0963">Cytoplasm</keyword>
<keyword id="KW-0413">Isomerase</keyword>
<keyword id="KW-0547">Nucleotide-binding</keyword>
<proteinExistence type="inferred from homology"/>
<comment type="function">
    <text evidence="1">Together with its co-chaperonin GroES, plays an essential role in assisting protein folding. The GroEL-GroES system forms a nano-cage that allows encapsulation of the non-native substrate proteins and provides a physical environment optimized to promote and accelerate protein folding.</text>
</comment>
<comment type="catalytic activity">
    <reaction evidence="1">
        <text>ATP + H2O + a folded polypeptide = ADP + phosphate + an unfolded polypeptide.</text>
        <dbReference type="EC" id="5.6.1.7"/>
    </reaction>
</comment>
<comment type="subunit">
    <text evidence="1">Forms a cylinder of 14 subunits composed of two heptameric rings stacked back-to-back. Interacts with the co-chaperonin GroES.</text>
</comment>
<comment type="subcellular location">
    <subcellularLocation>
        <location evidence="1">Cytoplasm</location>
    </subcellularLocation>
</comment>
<comment type="similarity">
    <text evidence="1">Belongs to the chaperonin (HSP60) family.</text>
</comment>
<organism>
    <name type="scientific">Brucella melitensis biotype 1 (strain ATCC 23456 / CCUG 17765 / NCTC 10094 / 16M)</name>
    <dbReference type="NCBI Taxonomy" id="224914"/>
    <lineage>
        <taxon>Bacteria</taxon>
        <taxon>Pseudomonadati</taxon>
        <taxon>Pseudomonadota</taxon>
        <taxon>Alphaproteobacteria</taxon>
        <taxon>Hyphomicrobiales</taxon>
        <taxon>Brucellaceae</taxon>
        <taxon>Brucella/Ochrobactrum group</taxon>
        <taxon>Brucella</taxon>
    </lineage>
</organism>
<name>CH60_BRUME</name>